<name>ATA1_ARATH</name>
<protein>
    <recommendedName>
        <fullName evidence="6">Short-chain dehydrogenase reductase ATA1</fullName>
        <ecNumber>1.1.1.-</ecNumber>
    </recommendedName>
    <alternativeName>
        <fullName evidence="5">Protein TAPETUM 1</fullName>
        <shortName evidence="5">ATA1</shortName>
    </alternativeName>
    <alternativeName>
        <fullName evidence="6">Tasselseed-2 homolog ATA1</fullName>
    </alternativeName>
</protein>
<organism>
    <name type="scientific">Arabidopsis thaliana</name>
    <name type="common">Mouse-ear cress</name>
    <dbReference type="NCBI Taxonomy" id="3702"/>
    <lineage>
        <taxon>Eukaryota</taxon>
        <taxon>Viridiplantae</taxon>
        <taxon>Streptophyta</taxon>
        <taxon>Embryophyta</taxon>
        <taxon>Tracheophyta</taxon>
        <taxon>Spermatophyta</taxon>
        <taxon>Magnoliopsida</taxon>
        <taxon>eudicotyledons</taxon>
        <taxon>Gunneridae</taxon>
        <taxon>Pentapetalae</taxon>
        <taxon>rosids</taxon>
        <taxon>malvids</taxon>
        <taxon>Brassicales</taxon>
        <taxon>Brassicaceae</taxon>
        <taxon>Camelineae</taxon>
        <taxon>Arabidopsis</taxon>
    </lineage>
</organism>
<evidence type="ECO:0000250" key="1"/>
<evidence type="ECO:0000250" key="2">
    <source>
        <dbReference type="UniProtKB" id="Q8WNV7"/>
    </source>
</evidence>
<evidence type="ECO:0000255" key="3">
    <source>
        <dbReference type="PROSITE-ProRule" id="PRU10001"/>
    </source>
</evidence>
<evidence type="ECO:0000269" key="4">
    <source>
    </source>
</evidence>
<evidence type="ECO:0000303" key="5">
    <source>
    </source>
</evidence>
<evidence type="ECO:0000305" key="6"/>
<evidence type="ECO:0000305" key="7">
    <source>
    </source>
</evidence>
<evidence type="ECO:0000312" key="8">
    <source>
        <dbReference type="Araport" id="AT3G42960"/>
    </source>
</evidence>
<evidence type="ECO:0000312" key="9">
    <source>
        <dbReference type="EMBL" id="CAB86683.1"/>
    </source>
</evidence>
<dbReference type="EC" id="1.1.1.-"/>
<dbReference type="EMBL" id="U76501">
    <property type="protein sequence ID" value="AAC49835.1"/>
    <property type="molecule type" value="mRNA"/>
</dbReference>
<dbReference type="EMBL" id="AL138654">
    <property type="protein sequence ID" value="CAB86683.1"/>
    <property type="molecule type" value="Genomic_DNA"/>
</dbReference>
<dbReference type="EMBL" id="CP002686">
    <property type="protein sequence ID" value="AEE77761.1"/>
    <property type="molecule type" value="Genomic_DNA"/>
</dbReference>
<dbReference type="EMBL" id="BT029345">
    <property type="protein sequence ID" value="ABK32159.1"/>
    <property type="molecule type" value="mRNA"/>
</dbReference>
<dbReference type="EMBL" id="AY086103">
    <property type="protein sequence ID" value="AAM63311.1"/>
    <property type="molecule type" value="mRNA"/>
</dbReference>
<dbReference type="PIR" id="T47354">
    <property type="entry name" value="T47354"/>
</dbReference>
<dbReference type="RefSeq" id="NP_189882.1">
    <property type="nucleotide sequence ID" value="NM_114164.2"/>
</dbReference>
<dbReference type="SMR" id="Q9M1K9"/>
<dbReference type="FunCoup" id="Q9M1K9">
    <property type="interactions" value="207"/>
</dbReference>
<dbReference type="STRING" id="3702.Q9M1K9"/>
<dbReference type="PaxDb" id="3702-AT3G42960.1"/>
<dbReference type="EnsemblPlants" id="AT3G42960.1">
    <property type="protein sequence ID" value="AT3G42960.1"/>
    <property type="gene ID" value="AT3G42960"/>
</dbReference>
<dbReference type="GeneID" id="823352"/>
<dbReference type="Gramene" id="AT3G42960.1">
    <property type="protein sequence ID" value="AT3G42960.1"/>
    <property type="gene ID" value="AT3G42960"/>
</dbReference>
<dbReference type="KEGG" id="ath:AT3G42960"/>
<dbReference type="Araport" id="AT3G42960"/>
<dbReference type="TAIR" id="AT3G42960">
    <property type="gene designation" value="ATA1"/>
</dbReference>
<dbReference type="eggNOG" id="KOG0725">
    <property type="taxonomic scope" value="Eukaryota"/>
</dbReference>
<dbReference type="HOGENOM" id="CLU_010194_1_0_1"/>
<dbReference type="InParanoid" id="Q9M1K9"/>
<dbReference type="OMA" id="TETAACE"/>
<dbReference type="PhylomeDB" id="Q9M1K9"/>
<dbReference type="BioCyc" id="ARA:AT3G42960-MONOMER"/>
<dbReference type="PRO" id="PR:Q9M1K9"/>
<dbReference type="Proteomes" id="UP000006548">
    <property type="component" value="Chromosome 3"/>
</dbReference>
<dbReference type="ExpressionAtlas" id="Q9M1K9">
    <property type="expression patterns" value="baseline and differential"/>
</dbReference>
<dbReference type="GO" id="GO:0042802">
    <property type="term" value="F:identical protein binding"/>
    <property type="evidence" value="ECO:0000353"/>
    <property type="project" value="IntAct"/>
</dbReference>
<dbReference type="GO" id="GO:0016491">
    <property type="term" value="F:oxidoreductase activity"/>
    <property type="evidence" value="ECO:0007669"/>
    <property type="project" value="UniProtKB-KW"/>
</dbReference>
<dbReference type="FunFam" id="3.40.50.720:FF:000084">
    <property type="entry name" value="Short-chain dehydrogenase reductase"/>
    <property type="match status" value="1"/>
</dbReference>
<dbReference type="Gene3D" id="3.40.50.720">
    <property type="entry name" value="NAD(P)-binding Rossmann-like Domain"/>
    <property type="match status" value="1"/>
</dbReference>
<dbReference type="InterPro" id="IPR036291">
    <property type="entry name" value="NAD(P)-bd_dom_sf"/>
</dbReference>
<dbReference type="InterPro" id="IPR002347">
    <property type="entry name" value="SDR_fam"/>
</dbReference>
<dbReference type="PANTHER" id="PTHR43180">
    <property type="entry name" value="3-OXOACYL-(ACYL-CARRIER-PROTEIN) REDUCTASE (AFU_ORTHOLOGUE AFUA_6G11210)"/>
    <property type="match status" value="1"/>
</dbReference>
<dbReference type="PANTHER" id="PTHR43180:SF42">
    <property type="entry name" value="SHORT-CHAIN DEHYDROGENASE REDUCTASE ATA1"/>
    <property type="match status" value="1"/>
</dbReference>
<dbReference type="Pfam" id="PF13561">
    <property type="entry name" value="adh_short_C2"/>
    <property type="match status" value="1"/>
</dbReference>
<dbReference type="PRINTS" id="PR00081">
    <property type="entry name" value="GDHRDH"/>
</dbReference>
<dbReference type="PRINTS" id="PR00080">
    <property type="entry name" value="SDRFAMILY"/>
</dbReference>
<dbReference type="SUPFAM" id="SSF51735">
    <property type="entry name" value="NAD(P)-binding Rossmann-fold domains"/>
    <property type="match status" value="1"/>
</dbReference>
<reference key="1">
    <citation type="journal article" date="1997" name="Plant J.">
        <title>Conserved expression of a TASSELSEED2 homolog in the tapetum of the dioecious Silene latifolia and Arabidopsis thaliana.</title>
        <authorList>
            <person name="Lebel-Hardenack S."/>
            <person name="Ye D."/>
            <person name="Koutnikova H."/>
            <person name="Saedler H."/>
            <person name="Grant S.R."/>
        </authorList>
    </citation>
    <scope>FUNCTION</scope>
    <scope>NUCLEOTIDE SEQUENCE [MRNA]</scope>
    <scope>TISSUE SPECIFICITY</scope>
    <source>
        <strain>cv. Columbia</strain>
    </source>
</reference>
<reference key="2">
    <citation type="journal article" date="2000" name="Nature">
        <title>Sequence and analysis of chromosome 3 of the plant Arabidopsis thaliana.</title>
        <authorList>
            <person name="Salanoubat M."/>
            <person name="Lemcke K."/>
            <person name="Rieger M."/>
            <person name="Ansorge W."/>
            <person name="Unseld M."/>
            <person name="Fartmann B."/>
            <person name="Valle G."/>
            <person name="Bloecker H."/>
            <person name="Perez-Alonso M."/>
            <person name="Obermaier B."/>
            <person name="Delseny M."/>
            <person name="Boutry M."/>
            <person name="Grivell L.A."/>
            <person name="Mache R."/>
            <person name="Puigdomenech P."/>
            <person name="De Simone V."/>
            <person name="Choisne N."/>
            <person name="Artiguenave F."/>
            <person name="Robert C."/>
            <person name="Brottier P."/>
            <person name="Wincker P."/>
            <person name="Cattolico L."/>
            <person name="Weissenbach J."/>
            <person name="Saurin W."/>
            <person name="Quetier F."/>
            <person name="Schaefer M."/>
            <person name="Mueller-Auer S."/>
            <person name="Gabel C."/>
            <person name="Fuchs M."/>
            <person name="Benes V."/>
            <person name="Wurmbach E."/>
            <person name="Drzonek H."/>
            <person name="Erfle H."/>
            <person name="Jordan N."/>
            <person name="Bangert S."/>
            <person name="Wiedelmann R."/>
            <person name="Kranz H."/>
            <person name="Voss H."/>
            <person name="Holland R."/>
            <person name="Brandt P."/>
            <person name="Nyakatura G."/>
            <person name="Vezzi A."/>
            <person name="D'Angelo M."/>
            <person name="Pallavicini A."/>
            <person name="Toppo S."/>
            <person name="Simionati B."/>
            <person name="Conrad A."/>
            <person name="Hornischer K."/>
            <person name="Kauer G."/>
            <person name="Loehnert T.-H."/>
            <person name="Nordsiek G."/>
            <person name="Reichelt J."/>
            <person name="Scharfe M."/>
            <person name="Schoen O."/>
            <person name="Bargues M."/>
            <person name="Terol J."/>
            <person name="Climent J."/>
            <person name="Navarro P."/>
            <person name="Collado C."/>
            <person name="Perez-Perez A."/>
            <person name="Ottenwaelder B."/>
            <person name="Duchemin D."/>
            <person name="Cooke R."/>
            <person name="Laudie M."/>
            <person name="Berger-Llauro C."/>
            <person name="Purnelle B."/>
            <person name="Masuy D."/>
            <person name="de Haan M."/>
            <person name="Maarse A.C."/>
            <person name="Alcaraz J.-P."/>
            <person name="Cottet A."/>
            <person name="Casacuberta E."/>
            <person name="Monfort A."/>
            <person name="Argiriou A."/>
            <person name="Flores M."/>
            <person name="Liguori R."/>
            <person name="Vitale D."/>
            <person name="Mannhaupt G."/>
            <person name="Haase D."/>
            <person name="Schoof H."/>
            <person name="Rudd S."/>
            <person name="Zaccaria P."/>
            <person name="Mewes H.-W."/>
            <person name="Mayer K.F.X."/>
            <person name="Kaul S."/>
            <person name="Town C.D."/>
            <person name="Koo H.L."/>
            <person name="Tallon L.J."/>
            <person name="Jenkins J."/>
            <person name="Rooney T."/>
            <person name="Rizzo M."/>
            <person name="Walts A."/>
            <person name="Utterback T."/>
            <person name="Fujii C.Y."/>
            <person name="Shea T.P."/>
            <person name="Creasy T.H."/>
            <person name="Haas B."/>
            <person name="Maiti R."/>
            <person name="Wu D."/>
            <person name="Peterson J."/>
            <person name="Van Aken S."/>
            <person name="Pai G."/>
            <person name="Militscher J."/>
            <person name="Sellers P."/>
            <person name="Gill J.E."/>
            <person name="Feldblyum T.V."/>
            <person name="Preuss D."/>
            <person name="Lin X."/>
            <person name="Nierman W.C."/>
            <person name="Salzberg S.L."/>
            <person name="White O."/>
            <person name="Venter J.C."/>
            <person name="Fraser C.M."/>
            <person name="Kaneko T."/>
            <person name="Nakamura Y."/>
            <person name="Sato S."/>
            <person name="Kato T."/>
            <person name="Asamizu E."/>
            <person name="Sasamoto S."/>
            <person name="Kimura T."/>
            <person name="Idesawa K."/>
            <person name="Kawashima K."/>
            <person name="Kishida Y."/>
            <person name="Kiyokawa C."/>
            <person name="Kohara M."/>
            <person name="Matsumoto M."/>
            <person name="Matsuno A."/>
            <person name="Muraki A."/>
            <person name="Nakayama S."/>
            <person name="Nakazaki N."/>
            <person name="Shinpo S."/>
            <person name="Takeuchi C."/>
            <person name="Wada T."/>
            <person name="Watanabe A."/>
            <person name="Yamada M."/>
            <person name="Yasuda M."/>
            <person name="Tabata S."/>
        </authorList>
    </citation>
    <scope>NUCLEOTIDE SEQUENCE [LARGE SCALE GENOMIC DNA]</scope>
    <source>
        <strain>cv. Columbia</strain>
    </source>
</reference>
<reference key="3">
    <citation type="journal article" date="2017" name="Plant J.">
        <title>Araport11: a complete reannotation of the Arabidopsis thaliana reference genome.</title>
        <authorList>
            <person name="Cheng C.Y."/>
            <person name="Krishnakumar V."/>
            <person name="Chan A.P."/>
            <person name="Thibaud-Nissen F."/>
            <person name="Schobel S."/>
            <person name="Town C.D."/>
        </authorList>
    </citation>
    <scope>GENOME REANNOTATION</scope>
    <source>
        <strain>cv. Columbia</strain>
    </source>
</reference>
<reference key="4">
    <citation type="submission" date="2006-11" db="EMBL/GenBank/DDBJ databases">
        <title>Arabidopsis ORF clones.</title>
        <authorList>
            <person name="Bautista V.R."/>
            <person name="Kim C.J."/>
            <person name="Chen H."/>
            <person name="Quinitio C."/>
            <person name="Ecker J.R."/>
        </authorList>
    </citation>
    <scope>NUCLEOTIDE SEQUENCE [LARGE SCALE MRNA]</scope>
    <source>
        <strain>cv. Columbia</strain>
    </source>
</reference>
<reference key="5">
    <citation type="submission" date="2002-03" db="EMBL/GenBank/DDBJ databases">
        <title>Full-length cDNA from Arabidopsis thaliana.</title>
        <authorList>
            <person name="Brover V.V."/>
            <person name="Troukhan M.E."/>
            <person name="Alexandrov N.A."/>
            <person name="Lu Y.-P."/>
            <person name="Flavell R.B."/>
            <person name="Feldmann K.A."/>
        </authorList>
    </citation>
    <scope>NUCLEOTIDE SEQUENCE [LARGE SCALE MRNA]</scope>
</reference>
<feature type="chain" id="PRO_0000433127" description="Short-chain dehydrogenase reductase ATA1">
    <location>
        <begin position="1"/>
        <end position="272"/>
    </location>
</feature>
<feature type="active site" description="Proton acceptor" evidence="2 3">
    <location>
        <position position="156"/>
    </location>
</feature>
<feature type="binding site" evidence="2">
    <location>
        <begin position="14"/>
        <end position="38"/>
    </location>
    <ligand>
        <name>NADP(+)</name>
        <dbReference type="ChEBI" id="CHEBI:58349"/>
    </ligand>
</feature>
<feature type="binding site" evidence="1">
    <location>
        <position position="143"/>
    </location>
    <ligand>
        <name>substrate</name>
    </ligand>
</feature>
<feature type="binding site" evidence="2">
    <location>
        <position position="160"/>
    </location>
    <ligand>
        <name>NADP(+)</name>
        <dbReference type="ChEBI" id="CHEBI:58349"/>
    </ligand>
</feature>
<feature type="sequence conflict" description="In Ref. 1; AAC49835." evidence="6" ref="1">
    <original>E</original>
    <variation>D</variation>
    <location>
        <position position="44"/>
    </location>
</feature>
<feature type="sequence conflict" description="In Ref. 1; AAC49835." evidence="6" ref="1">
    <original>A</original>
    <variation>G</variation>
    <location>
        <position position="162"/>
    </location>
</feature>
<feature type="sequence conflict" description="In Ref. 1; AAC49835." evidence="6" ref="1">
    <original>A</original>
    <variation>E</variation>
    <location>
        <position position="171"/>
    </location>
</feature>
<feature type="sequence conflict" description="In Ref. 5; AAM63311 and 1; AAC49835." evidence="6" ref="5 1">
    <original>H</original>
    <variation>N</variation>
    <location>
        <position position="204"/>
    </location>
</feature>
<keyword id="KW-0521">NADP</keyword>
<keyword id="KW-0560">Oxidoreductase</keyword>
<keyword id="KW-1185">Reference proteome</keyword>
<accession>Q9M1K9</accession>
<accession>O24452</accession>
<accession>Q8LDB0</accession>
<gene>
    <name evidence="6" type="primary">TA1</name>
    <name evidence="8" type="ordered locus">At3g42960</name>
    <name evidence="9" type="ORF">F18P9.120</name>
</gene>
<proteinExistence type="evidence at protein level"/>
<sequence length="272" mass="28346">MANSDKRLFEKVAIITGGARGIGAATARLFTENGAYVIVADILENEGILVAESIGGCYVHCDVSKEADVEAAVELAMRRKGRLDVMFNNAGMSLNEGSIMGMDVDMVNKLVSVNVNGVLHGIKHAAKAMIKGGRGGSIICTSSSSGLMGGLGGHAYTLSKGAINGVVRTTACELGSHGIRVNSISPHGVPTDILVNAYRKFLNHDKLNVAEVTDIIAEKGSLLTGRAGTVEDVAQAALFLASQESSGFITGHNLVVDGGYTSATSTMRFIYN</sequence>
<comment type="function">
    <text evidence="7">May play a role in tapetum development.</text>
</comment>
<comment type="interaction">
    <interactant intactId="EBI-4442798">
        <id>Q9M1K9</id>
    </interactant>
    <interactant intactId="EBI-4442798">
        <id>Q9M1K9</id>
        <label>TA1</label>
    </interactant>
    <organismsDiffer>false</organismsDiffer>
    <experiments>4</experiments>
</comment>
<comment type="tissue specificity">
    <text evidence="4">Expressed specifically in tapetal cells.</text>
</comment>
<comment type="similarity">
    <text evidence="6">Belongs to the short-chain dehydrogenases/reductases (SDR) family.</text>
</comment>